<gene>
    <name evidence="1" type="primary">rpsD</name>
    <name type="ordered locus">PAM_586</name>
</gene>
<evidence type="ECO:0000255" key="1">
    <source>
        <dbReference type="HAMAP-Rule" id="MF_01306"/>
    </source>
</evidence>
<evidence type="ECO:0000305" key="2"/>
<reference key="1">
    <citation type="journal article" date="2004" name="Nat. Genet.">
        <title>Reductive evolution suggested from the complete genome sequence of a plant-pathogenic phytoplasma.</title>
        <authorList>
            <person name="Oshima K."/>
            <person name="Kakizawa S."/>
            <person name="Nishigawa H."/>
            <person name="Jung H.-Y."/>
            <person name="Wei W."/>
            <person name="Suzuki S."/>
            <person name="Arashida R."/>
            <person name="Nakata D."/>
            <person name="Miyata S."/>
            <person name="Ugaki M."/>
            <person name="Namba S."/>
        </authorList>
    </citation>
    <scope>NUCLEOTIDE SEQUENCE [LARGE SCALE GENOMIC DNA]</scope>
    <source>
        <strain>OY-M</strain>
    </source>
</reference>
<dbReference type="EMBL" id="AP006628">
    <property type="protein sequence ID" value="BAD04671.1"/>
    <property type="status" value="ALT_FRAME"/>
    <property type="molecule type" value="Genomic_DNA"/>
</dbReference>
<dbReference type="SMR" id="Q6YPY9"/>
<dbReference type="STRING" id="262768.PAM_586"/>
<dbReference type="KEGG" id="poy:PAM_586"/>
<dbReference type="eggNOG" id="COG0522">
    <property type="taxonomic scope" value="Bacteria"/>
</dbReference>
<dbReference type="HOGENOM" id="CLU_092403_1_0_14"/>
<dbReference type="Proteomes" id="UP000002523">
    <property type="component" value="Chromosome"/>
</dbReference>
<dbReference type="GO" id="GO:0015935">
    <property type="term" value="C:small ribosomal subunit"/>
    <property type="evidence" value="ECO:0007669"/>
    <property type="project" value="InterPro"/>
</dbReference>
<dbReference type="GO" id="GO:0019843">
    <property type="term" value="F:rRNA binding"/>
    <property type="evidence" value="ECO:0007669"/>
    <property type="project" value="UniProtKB-UniRule"/>
</dbReference>
<dbReference type="GO" id="GO:0003735">
    <property type="term" value="F:structural constituent of ribosome"/>
    <property type="evidence" value="ECO:0007669"/>
    <property type="project" value="InterPro"/>
</dbReference>
<dbReference type="GO" id="GO:0042274">
    <property type="term" value="P:ribosomal small subunit biogenesis"/>
    <property type="evidence" value="ECO:0007669"/>
    <property type="project" value="TreeGrafter"/>
</dbReference>
<dbReference type="GO" id="GO:0006412">
    <property type="term" value="P:translation"/>
    <property type="evidence" value="ECO:0007669"/>
    <property type="project" value="UniProtKB-UniRule"/>
</dbReference>
<dbReference type="CDD" id="cd00165">
    <property type="entry name" value="S4"/>
    <property type="match status" value="1"/>
</dbReference>
<dbReference type="FunFam" id="3.10.290.10:FF:000001">
    <property type="entry name" value="30S ribosomal protein S4"/>
    <property type="match status" value="1"/>
</dbReference>
<dbReference type="Gene3D" id="1.10.1050.10">
    <property type="entry name" value="Ribosomal Protein S4 Delta 41, Chain A, domain 1"/>
    <property type="match status" value="1"/>
</dbReference>
<dbReference type="Gene3D" id="3.10.290.10">
    <property type="entry name" value="RNA-binding S4 domain"/>
    <property type="match status" value="1"/>
</dbReference>
<dbReference type="HAMAP" id="MF_01306_B">
    <property type="entry name" value="Ribosomal_uS4_B"/>
    <property type="match status" value="1"/>
</dbReference>
<dbReference type="InterPro" id="IPR022801">
    <property type="entry name" value="Ribosomal_uS4"/>
</dbReference>
<dbReference type="InterPro" id="IPR005709">
    <property type="entry name" value="Ribosomal_uS4_bac-type"/>
</dbReference>
<dbReference type="InterPro" id="IPR001912">
    <property type="entry name" value="Ribosomal_uS4_N"/>
</dbReference>
<dbReference type="InterPro" id="IPR002942">
    <property type="entry name" value="S4_RNA-bd"/>
</dbReference>
<dbReference type="InterPro" id="IPR036986">
    <property type="entry name" value="S4_RNA-bd_sf"/>
</dbReference>
<dbReference type="NCBIfam" id="NF003717">
    <property type="entry name" value="PRK05327.1"/>
    <property type="match status" value="1"/>
</dbReference>
<dbReference type="NCBIfam" id="TIGR01017">
    <property type="entry name" value="rpsD_bact"/>
    <property type="match status" value="1"/>
</dbReference>
<dbReference type="PANTHER" id="PTHR11831">
    <property type="entry name" value="30S 40S RIBOSOMAL PROTEIN"/>
    <property type="match status" value="1"/>
</dbReference>
<dbReference type="PANTHER" id="PTHR11831:SF4">
    <property type="entry name" value="SMALL RIBOSOMAL SUBUNIT PROTEIN US4M"/>
    <property type="match status" value="1"/>
</dbReference>
<dbReference type="Pfam" id="PF00163">
    <property type="entry name" value="Ribosomal_S4"/>
    <property type="match status" value="1"/>
</dbReference>
<dbReference type="Pfam" id="PF01479">
    <property type="entry name" value="S4"/>
    <property type="match status" value="1"/>
</dbReference>
<dbReference type="SMART" id="SM01390">
    <property type="entry name" value="Ribosomal_S4"/>
    <property type="match status" value="1"/>
</dbReference>
<dbReference type="SMART" id="SM00363">
    <property type="entry name" value="S4"/>
    <property type="match status" value="1"/>
</dbReference>
<dbReference type="SUPFAM" id="SSF55174">
    <property type="entry name" value="Alpha-L RNA-binding motif"/>
    <property type="match status" value="1"/>
</dbReference>
<dbReference type="PROSITE" id="PS50889">
    <property type="entry name" value="S4"/>
    <property type="match status" value="1"/>
</dbReference>
<proteinExistence type="inferred from homology"/>
<organism>
    <name type="scientific">Onion yellows phytoplasma (strain OY-M)</name>
    <dbReference type="NCBI Taxonomy" id="262768"/>
    <lineage>
        <taxon>Bacteria</taxon>
        <taxon>Bacillati</taxon>
        <taxon>Mycoplasmatota</taxon>
        <taxon>Mollicutes</taxon>
        <taxon>Acholeplasmatales</taxon>
        <taxon>Acholeplasmataceae</taxon>
        <taxon>Candidatus Phytoplasma</taxon>
        <taxon>16SrI (Aster yellows group)</taxon>
    </lineage>
</organism>
<keyword id="KW-0687">Ribonucleoprotein</keyword>
<keyword id="KW-0689">Ribosomal protein</keyword>
<keyword id="KW-0694">RNA-binding</keyword>
<keyword id="KW-0699">rRNA-binding</keyword>
<protein>
    <recommendedName>
        <fullName evidence="1">Small ribosomal subunit protein uS4</fullName>
    </recommendedName>
    <alternativeName>
        <fullName evidence="2">30S ribosomal protein S4</fullName>
    </alternativeName>
</protein>
<comment type="function">
    <text evidence="1">One of the primary rRNA binding proteins, it binds directly to 16S rRNA where it nucleates assembly of the body of the 30S subunit.</text>
</comment>
<comment type="function">
    <text evidence="1">With S5 and S12 plays an important role in translational accuracy.</text>
</comment>
<comment type="subunit">
    <text evidence="1">Part of the 30S ribosomal subunit. Contacts protein S5. The interaction surface between S4 and S5 is involved in control of translational fidelity.</text>
</comment>
<comment type="similarity">
    <text evidence="1">Belongs to the universal ribosomal protein uS4 family.</text>
</comment>
<comment type="sequence caution" evidence="2">
    <conflict type="frameshift">
        <sequence resource="EMBL-CDS" id="BAD04671"/>
    </conflict>
</comment>
<accession>Q6YPY9</accession>
<sequence>MSRYTGSLWKVSRRLNYSVSETGKELRKRAYGPGQHGQKKLKLSDYGLQLQEKQKLRFTYGVSEKQFRKTFDNASKLKGIHGEMFLVLLESRLDNVVYRLGFAKTRAQARQLANHGHILVDGKKVDIASYRLKPGQTVTLREKSKNLNIVQEAVNSKFVRADYVSLDKELVGKYVRYPQRNEFLPDINEQLIVEYYNR</sequence>
<name>RS4_ONYPE</name>
<feature type="chain" id="PRO_0000293329" description="Small ribosomal subunit protein uS4">
    <location>
        <begin position="1"/>
        <end position="198"/>
    </location>
</feature>
<feature type="domain" description="S4 RNA-binding" evidence="1">
    <location>
        <begin position="91"/>
        <end position="154"/>
    </location>
</feature>